<protein>
    <recommendedName>
        <fullName evidence="1">NAD kinase</fullName>
        <ecNumber evidence="1">2.7.1.23</ecNumber>
    </recommendedName>
    <alternativeName>
        <fullName evidence="1">ATP-dependent NAD kinase</fullName>
    </alternativeName>
</protein>
<reference key="1">
    <citation type="journal article" date="2002" name="Nature">
        <title>Comparison of the genomes of two Xanthomonas pathogens with differing host specificities.</title>
        <authorList>
            <person name="da Silva A.C.R."/>
            <person name="Ferro J.A."/>
            <person name="Reinach F.C."/>
            <person name="Farah C.S."/>
            <person name="Furlan L.R."/>
            <person name="Quaggio R.B."/>
            <person name="Monteiro-Vitorello C.B."/>
            <person name="Van Sluys M.A."/>
            <person name="Almeida N.F. Jr."/>
            <person name="Alves L.M.C."/>
            <person name="do Amaral A.M."/>
            <person name="Bertolini M.C."/>
            <person name="Camargo L.E.A."/>
            <person name="Camarotte G."/>
            <person name="Cannavan F."/>
            <person name="Cardozo J."/>
            <person name="Chambergo F."/>
            <person name="Ciapina L.P."/>
            <person name="Cicarelli R.M.B."/>
            <person name="Coutinho L.L."/>
            <person name="Cursino-Santos J.R."/>
            <person name="El-Dorry H."/>
            <person name="Faria J.B."/>
            <person name="Ferreira A.J.S."/>
            <person name="Ferreira R.C.C."/>
            <person name="Ferro M.I.T."/>
            <person name="Formighieri E.F."/>
            <person name="Franco M.C."/>
            <person name="Greggio C.C."/>
            <person name="Gruber A."/>
            <person name="Katsuyama A.M."/>
            <person name="Kishi L.T."/>
            <person name="Leite R.P."/>
            <person name="Lemos E.G.M."/>
            <person name="Lemos M.V.F."/>
            <person name="Locali E.C."/>
            <person name="Machado M.A."/>
            <person name="Madeira A.M.B.N."/>
            <person name="Martinez-Rossi N.M."/>
            <person name="Martins E.C."/>
            <person name="Meidanis J."/>
            <person name="Menck C.F.M."/>
            <person name="Miyaki C.Y."/>
            <person name="Moon D.H."/>
            <person name="Moreira L.M."/>
            <person name="Novo M.T.M."/>
            <person name="Okura V.K."/>
            <person name="Oliveira M.C."/>
            <person name="Oliveira V.R."/>
            <person name="Pereira H.A."/>
            <person name="Rossi A."/>
            <person name="Sena J.A.D."/>
            <person name="Silva C."/>
            <person name="de Souza R.F."/>
            <person name="Spinola L.A.F."/>
            <person name="Takita M.A."/>
            <person name="Tamura R.E."/>
            <person name="Teixeira E.C."/>
            <person name="Tezza R.I.D."/>
            <person name="Trindade dos Santos M."/>
            <person name="Truffi D."/>
            <person name="Tsai S.M."/>
            <person name="White F.F."/>
            <person name="Setubal J.C."/>
            <person name="Kitajima J.P."/>
        </authorList>
    </citation>
    <scope>NUCLEOTIDE SEQUENCE [LARGE SCALE GENOMIC DNA]</scope>
    <source>
        <strain>ATCC 33913 / DSM 3586 / NCPPB 528 / LMG 568 / P 25</strain>
    </source>
</reference>
<proteinExistence type="inferred from homology"/>
<keyword id="KW-0067">ATP-binding</keyword>
<keyword id="KW-0963">Cytoplasm</keyword>
<keyword id="KW-0418">Kinase</keyword>
<keyword id="KW-0520">NAD</keyword>
<keyword id="KW-0521">NADP</keyword>
<keyword id="KW-0547">Nucleotide-binding</keyword>
<keyword id="KW-1185">Reference proteome</keyword>
<keyword id="KW-0808">Transferase</keyword>
<organism>
    <name type="scientific">Xanthomonas campestris pv. campestris (strain ATCC 33913 / DSM 3586 / NCPPB 528 / LMG 568 / P 25)</name>
    <dbReference type="NCBI Taxonomy" id="190485"/>
    <lineage>
        <taxon>Bacteria</taxon>
        <taxon>Pseudomonadati</taxon>
        <taxon>Pseudomonadota</taxon>
        <taxon>Gammaproteobacteria</taxon>
        <taxon>Lysobacterales</taxon>
        <taxon>Lysobacteraceae</taxon>
        <taxon>Xanthomonas</taxon>
    </lineage>
</organism>
<gene>
    <name evidence="1" type="primary">nadK</name>
    <name type="ordered locus">XCC1546</name>
</gene>
<name>NADK_XANCP</name>
<evidence type="ECO:0000255" key="1">
    <source>
        <dbReference type="HAMAP-Rule" id="MF_00361"/>
    </source>
</evidence>
<feature type="chain" id="PRO_0000120692" description="NAD kinase">
    <location>
        <begin position="1"/>
        <end position="258"/>
    </location>
</feature>
<feature type="active site" description="Proton acceptor" evidence="1">
    <location>
        <position position="45"/>
    </location>
</feature>
<feature type="binding site" evidence="1">
    <location>
        <begin position="45"/>
        <end position="46"/>
    </location>
    <ligand>
        <name>NAD(+)</name>
        <dbReference type="ChEBI" id="CHEBI:57540"/>
    </ligand>
</feature>
<feature type="binding site" evidence="1">
    <location>
        <begin position="117"/>
        <end position="118"/>
    </location>
    <ligand>
        <name>NAD(+)</name>
        <dbReference type="ChEBI" id="CHEBI:57540"/>
    </ligand>
</feature>
<feature type="binding site" evidence="1">
    <location>
        <position position="147"/>
    </location>
    <ligand>
        <name>NAD(+)</name>
        <dbReference type="ChEBI" id="CHEBI:57540"/>
    </ligand>
</feature>
<feature type="binding site" evidence="1">
    <location>
        <position position="155"/>
    </location>
    <ligand>
        <name>NAD(+)</name>
        <dbReference type="ChEBI" id="CHEBI:57540"/>
    </ligand>
</feature>
<feature type="binding site" evidence="1">
    <location>
        <begin position="158"/>
        <end position="163"/>
    </location>
    <ligand>
        <name>NAD(+)</name>
        <dbReference type="ChEBI" id="CHEBI:57540"/>
    </ligand>
</feature>
<feature type="binding site" evidence="1">
    <location>
        <position position="182"/>
    </location>
    <ligand>
        <name>NAD(+)</name>
        <dbReference type="ChEBI" id="CHEBI:57540"/>
    </ligand>
</feature>
<accession>Q8PAD9</accession>
<sequence length="258" mass="28471">MTAMPRIAFLASPAEPAVAARARLVQRYGDHALHDADIVCALGGDGFMLQTLHRHGAADKPVFGMKLGSVGFLMNQYRDDEDDLLARLQRAEPAHLRPLEMLVQTESGTSAGSLAYNEVSLLRQTRQAAHLSVDLNGQTRIAELIGDGVMVATPAGSTAYNYSAHGPILPLGSHTLALTPIAPYRPRRWRGAILKADTEVRFRVLDPYKRPVSVTADSHEIRDVVEVTIRESTERRVTLLFDPEHNLEERIFSEQFAV</sequence>
<comment type="function">
    <text evidence="1">Involved in the regulation of the intracellular balance of NAD and NADP, and is a key enzyme in the biosynthesis of NADP. Catalyzes specifically the phosphorylation on 2'-hydroxyl of the adenosine moiety of NAD to yield NADP.</text>
</comment>
<comment type="catalytic activity">
    <reaction evidence="1">
        <text>NAD(+) + ATP = ADP + NADP(+) + H(+)</text>
        <dbReference type="Rhea" id="RHEA:18629"/>
        <dbReference type="ChEBI" id="CHEBI:15378"/>
        <dbReference type="ChEBI" id="CHEBI:30616"/>
        <dbReference type="ChEBI" id="CHEBI:57540"/>
        <dbReference type="ChEBI" id="CHEBI:58349"/>
        <dbReference type="ChEBI" id="CHEBI:456216"/>
        <dbReference type="EC" id="2.7.1.23"/>
    </reaction>
</comment>
<comment type="cofactor">
    <cofactor evidence="1">
        <name>a divalent metal cation</name>
        <dbReference type="ChEBI" id="CHEBI:60240"/>
    </cofactor>
</comment>
<comment type="subcellular location">
    <subcellularLocation>
        <location evidence="1">Cytoplasm</location>
    </subcellularLocation>
</comment>
<comment type="similarity">
    <text evidence="1">Belongs to the NAD kinase family.</text>
</comment>
<dbReference type="EC" id="2.7.1.23" evidence="1"/>
<dbReference type="EMBL" id="AE008922">
    <property type="protein sequence ID" value="AAM40841.1"/>
    <property type="molecule type" value="Genomic_DNA"/>
</dbReference>
<dbReference type="RefSeq" id="NP_636917.1">
    <property type="nucleotide sequence ID" value="NC_003902.1"/>
</dbReference>
<dbReference type="RefSeq" id="WP_011036730.1">
    <property type="nucleotide sequence ID" value="NC_003902.1"/>
</dbReference>
<dbReference type="SMR" id="Q8PAD9"/>
<dbReference type="STRING" id="190485.XCC1546"/>
<dbReference type="EnsemblBacteria" id="AAM40841">
    <property type="protein sequence ID" value="AAM40841"/>
    <property type="gene ID" value="XCC1546"/>
</dbReference>
<dbReference type="KEGG" id="xcc:XCC1546"/>
<dbReference type="PATRIC" id="fig|190485.4.peg.1659"/>
<dbReference type="eggNOG" id="COG0061">
    <property type="taxonomic scope" value="Bacteria"/>
</dbReference>
<dbReference type="HOGENOM" id="CLU_073319_0_0_6"/>
<dbReference type="OrthoDB" id="9774737at2"/>
<dbReference type="Proteomes" id="UP000001010">
    <property type="component" value="Chromosome"/>
</dbReference>
<dbReference type="GO" id="GO:0005737">
    <property type="term" value="C:cytoplasm"/>
    <property type="evidence" value="ECO:0007669"/>
    <property type="project" value="UniProtKB-SubCell"/>
</dbReference>
<dbReference type="GO" id="GO:0005524">
    <property type="term" value="F:ATP binding"/>
    <property type="evidence" value="ECO:0007669"/>
    <property type="project" value="UniProtKB-KW"/>
</dbReference>
<dbReference type="GO" id="GO:0046872">
    <property type="term" value="F:metal ion binding"/>
    <property type="evidence" value="ECO:0007669"/>
    <property type="project" value="UniProtKB-UniRule"/>
</dbReference>
<dbReference type="GO" id="GO:0051287">
    <property type="term" value="F:NAD binding"/>
    <property type="evidence" value="ECO:0007669"/>
    <property type="project" value="UniProtKB-ARBA"/>
</dbReference>
<dbReference type="GO" id="GO:0003951">
    <property type="term" value="F:NAD+ kinase activity"/>
    <property type="evidence" value="ECO:0000318"/>
    <property type="project" value="GO_Central"/>
</dbReference>
<dbReference type="GO" id="GO:0019674">
    <property type="term" value="P:NAD metabolic process"/>
    <property type="evidence" value="ECO:0007669"/>
    <property type="project" value="InterPro"/>
</dbReference>
<dbReference type="GO" id="GO:0006741">
    <property type="term" value="P:NADP biosynthetic process"/>
    <property type="evidence" value="ECO:0000318"/>
    <property type="project" value="GO_Central"/>
</dbReference>
<dbReference type="FunFam" id="2.60.200.30:FF:000012">
    <property type="entry name" value="NAD kinase"/>
    <property type="match status" value="1"/>
</dbReference>
<dbReference type="Gene3D" id="3.40.50.10330">
    <property type="entry name" value="Probable inorganic polyphosphate/atp-NAD kinase, domain 1"/>
    <property type="match status" value="1"/>
</dbReference>
<dbReference type="Gene3D" id="2.60.200.30">
    <property type="entry name" value="Probable inorganic polyphosphate/atp-NAD kinase, domain 2"/>
    <property type="match status" value="1"/>
</dbReference>
<dbReference type="HAMAP" id="MF_00361">
    <property type="entry name" value="NAD_kinase"/>
    <property type="match status" value="1"/>
</dbReference>
<dbReference type="InterPro" id="IPR017438">
    <property type="entry name" value="ATP-NAD_kinase_N"/>
</dbReference>
<dbReference type="InterPro" id="IPR017437">
    <property type="entry name" value="ATP-NAD_kinase_PpnK-typ_C"/>
</dbReference>
<dbReference type="InterPro" id="IPR016064">
    <property type="entry name" value="NAD/diacylglycerol_kinase_sf"/>
</dbReference>
<dbReference type="InterPro" id="IPR002504">
    <property type="entry name" value="NADK"/>
</dbReference>
<dbReference type="NCBIfam" id="NF003406">
    <property type="entry name" value="PRK04761.1"/>
    <property type="match status" value="1"/>
</dbReference>
<dbReference type="PANTHER" id="PTHR20275">
    <property type="entry name" value="NAD KINASE"/>
    <property type="match status" value="1"/>
</dbReference>
<dbReference type="PANTHER" id="PTHR20275:SF0">
    <property type="entry name" value="NAD KINASE"/>
    <property type="match status" value="1"/>
</dbReference>
<dbReference type="Pfam" id="PF01513">
    <property type="entry name" value="NAD_kinase"/>
    <property type="match status" value="1"/>
</dbReference>
<dbReference type="Pfam" id="PF20143">
    <property type="entry name" value="NAD_kinase_C"/>
    <property type="match status" value="1"/>
</dbReference>
<dbReference type="SUPFAM" id="SSF111331">
    <property type="entry name" value="NAD kinase/diacylglycerol kinase-like"/>
    <property type="match status" value="1"/>
</dbReference>